<name>AHPC_STAS1</name>
<protein>
    <recommendedName>
        <fullName>Alkyl hydroperoxide reductase C</fullName>
        <ecNumber evidence="1">1.11.1.26</ecNumber>
    </recommendedName>
    <alternativeName>
        <fullName>Peroxiredoxin</fullName>
    </alternativeName>
    <alternativeName>
        <fullName>Thioredoxin peroxidase</fullName>
    </alternativeName>
</protein>
<evidence type="ECO:0000250" key="1">
    <source>
        <dbReference type="UniProtKB" id="P0A251"/>
    </source>
</evidence>
<evidence type="ECO:0000250" key="2">
    <source>
        <dbReference type="UniProtKB" id="P0AE08"/>
    </source>
</evidence>
<evidence type="ECO:0000255" key="3">
    <source>
        <dbReference type="PROSITE-ProRule" id="PRU00691"/>
    </source>
</evidence>
<evidence type="ECO:0000305" key="4"/>
<comment type="function">
    <text evidence="1">Thiol-specific peroxidase that catalyzes the reduction of hydrogen peroxide and organic hydroperoxides to water and alcohols, respectively. Plays a role in cell protection against oxidative stress by detoxifying peroxides.</text>
</comment>
<comment type="catalytic activity">
    <reaction evidence="1">
        <text>a hydroperoxide + NADH + H(+) = an alcohol + NAD(+) + H2O</text>
        <dbReference type="Rhea" id="RHEA:62628"/>
        <dbReference type="ChEBI" id="CHEBI:15377"/>
        <dbReference type="ChEBI" id="CHEBI:15378"/>
        <dbReference type="ChEBI" id="CHEBI:30879"/>
        <dbReference type="ChEBI" id="CHEBI:35924"/>
        <dbReference type="ChEBI" id="CHEBI:57540"/>
        <dbReference type="ChEBI" id="CHEBI:57945"/>
        <dbReference type="EC" id="1.11.1.26"/>
    </reaction>
</comment>
<comment type="subunit">
    <text evidence="1">Homodimer; disulfide-linked, upon oxidation. 5 homodimers assemble to form a ring-like decamer.</text>
</comment>
<comment type="subcellular location">
    <subcellularLocation>
        <location evidence="2">Cytoplasm</location>
    </subcellularLocation>
</comment>
<comment type="miscellaneous">
    <text evidence="1">The active site is a conserved redox-active cysteine residue, the peroxidatic cysteine (C(P)), which makes the nucleophilic attack on the peroxide substrate. The peroxide oxidizes the C(P)-SH to cysteine sulfenic acid (C(P)-SOH), which then reacts with another cysteine residue, the resolving cysteine (C(R)), to form a disulfide bridge. The disulfide is subsequently reduced by an appropriate electron donor to complete the catalytic cycle. In this typical 2-Cys peroxiredoxin, C(R) is provided by the other dimeric subunit to form an intersubunit disulfide. The disulfide is subsequently reduced by AhpF.</text>
</comment>
<comment type="similarity">
    <text evidence="4">Belongs to the peroxiredoxin family. AhpC/Prx1 subfamily.</text>
</comment>
<gene>
    <name type="primary">ahpC</name>
    <name type="ordered locus">SSP2333</name>
</gene>
<feature type="chain" id="PRO_0000279762" description="Alkyl hydroperoxide reductase C">
    <location>
        <begin position="1"/>
        <end position="189"/>
    </location>
</feature>
<feature type="domain" description="Thioredoxin" evidence="3">
    <location>
        <begin position="2"/>
        <end position="159"/>
    </location>
</feature>
<feature type="active site" description="Cysteine sulfenic acid (-SOH) intermediate" evidence="1">
    <location>
        <position position="49"/>
    </location>
</feature>
<feature type="disulfide bond" description="Interchain (with C-168); in linked form" evidence="1">
    <location>
        <position position="49"/>
    </location>
</feature>
<feature type="disulfide bond" description="Interchain (with C-49); in linked form" evidence="1">
    <location>
        <position position="168"/>
    </location>
</feature>
<organism>
    <name type="scientific">Staphylococcus saprophyticus subsp. saprophyticus (strain ATCC 15305 / DSM 20229 / NCIMB 8711 / NCTC 7292 / S-41)</name>
    <dbReference type="NCBI Taxonomy" id="342451"/>
    <lineage>
        <taxon>Bacteria</taxon>
        <taxon>Bacillati</taxon>
        <taxon>Bacillota</taxon>
        <taxon>Bacilli</taxon>
        <taxon>Bacillales</taxon>
        <taxon>Staphylococcaceae</taxon>
        <taxon>Staphylococcus</taxon>
    </lineage>
</organism>
<accession>Q49UT8</accession>
<proteinExistence type="inferred from homology"/>
<keyword id="KW-0049">Antioxidant</keyword>
<keyword id="KW-0963">Cytoplasm</keyword>
<keyword id="KW-1015">Disulfide bond</keyword>
<keyword id="KW-0560">Oxidoreductase</keyword>
<keyword id="KW-0575">Peroxidase</keyword>
<keyword id="KW-0676">Redox-active center</keyword>
<keyword id="KW-1185">Reference proteome</keyword>
<reference key="1">
    <citation type="journal article" date="2005" name="Proc. Natl. Acad. Sci. U.S.A.">
        <title>Whole genome sequence of Staphylococcus saprophyticus reveals the pathogenesis of uncomplicated urinary tract infection.</title>
        <authorList>
            <person name="Kuroda M."/>
            <person name="Yamashita A."/>
            <person name="Hirakawa H."/>
            <person name="Kumano M."/>
            <person name="Morikawa K."/>
            <person name="Higashide M."/>
            <person name="Maruyama A."/>
            <person name="Inose Y."/>
            <person name="Matoba K."/>
            <person name="Toh H."/>
            <person name="Kuhara S."/>
            <person name="Hattori M."/>
            <person name="Ohta T."/>
        </authorList>
    </citation>
    <scope>NUCLEOTIDE SEQUENCE [LARGE SCALE GENOMIC DNA]</scope>
    <source>
        <strain>ATCC 15305 / DSM 20229 / NCIMB 8711 / NCTC 7292 / S-41</strain>
    </source>
</reference>
<dbReference type="EC" id="1.11.1.26" evidence="1"/>
<dbReference type="EMBL" id="AP008934">
    <property type="protein sequence ID" value="BAE19478.1"/>
    <property type="molecule type" value="Genomic_DNA"/>
</dbReference>
<dbReference type="RefSeq" id="WP_002484274.1">
    <property type="nucleotide sequence ID" value="NZ_MTGA01000035.1"/>
</dbReference>
<dbReference type="SMR" id="Q49UT8"/>
<dbReference type="GeneID" id="66868501"/>
<dbReference type="KEGG" id="ssp:SSP2333"/>
<dbReference type="eggNOG" id="COG0450">
    <property type="taxonomic scope" value="Bacteria"/>
</dbReference>
<dbReference type="HOGENOM" id="CLU_042529_21_3_9"/>
<dbReference type="OrthoDB" id="9812811at2"/>
<dbReference type="Proteomes" id="UP000006371">
    <property type="component" value="Chromosome"/>
</dbReference>
<dbReference type="GO" id="GO:0005829">
    <property type="term" value="C:cytosol"/>
    <property type="evidence" value="ECO:0007669"/>
    <property type="project" value="TreeGrafter"/>
</dbReference>
<dbReference type="GO" id="GO:0102039">
    <property type="term" value="F:NADH-dependent peroxiredoxin activity"/>
    <property type="evidence" value="ECO:0007669"/>
    <property type="project" value="UniProtKB-EC"/>
</dbReference>
<dbReference type="GO" id="GO:0008379">
    <property type="term" value="F:thioredoxin peroxidase activity"/>
    <property type="evidence" value="ECO:0007669"/>
    <property type="project" value="TreeGrafter"/>
</dbReference>
<dbReference type="GO" id="GO:0045454">
    <property type="term" value="P:cell redox homeostasis"/>
    <property type="evidence" value="ECO:0007669"/>
    <property type="project" value="TreeGrafter"/>
</dbReference>
<dbReference type="GO" id="GO:0033554">
    <property type="term" value="P:cellular response to stress"/>
    <property type="evidence" value="ECO:0007669"/>
    <property type="project" value="TreeGrafter"/>
</dbReference>
<dbReference type="GO" id="GO:0042744">
    <property type="term" value="P:hydrogen peroxide catabolic process"/>
    <property type="evidence" value="ECO:0007669"/>
    <property type="project" value="TreeGrafter"/>
</dbReference>
<dbReference type="GO" id="GO:0006979">
    <property type="term" value="P:response to oxidative stress"/>
    <property type="evidence" value="ECO:0007669"/>
    <property type="project" value="InterPro"/>
</dbReference>
<dbReference type="CDD" id="cd03015">
    <property type="entry name" value="PRX_Typ2cys"/>
    <property type="match status" value="1"/>
</dbReference>
<dbReference type="FunFam" id="3.40.30.10:FF:000002">
    <property type="entry name" value="Alkyl hydroperoxide reductase C"/>
    <property type="match status" value="1"/>
</dbReference>
<dbReference type="Gene3D" id="3.40.30.10">
    <property type="entry name" value="Glutaredoxin"/>
    <property type="match status" value="1"/>
</dbReference>
<dbReference type="InterPro" id="IPR017559">
    <property type="entry name" value="AhpC"/>
</dbReference>
<dbReference type="InterPro" id="IPR000866">
    <property type="entry name" value="AhpC/TSA"/>
</dbReference>
<dbReference type="InterPro" id="IPR050217">
    <property type="entry name" value="Peroxiredoxin"/>
</dbReference>
<dbReference type="InterPro" id="IPR024706">
    <property type="entry name" value="Peroxiredoxin_AhpC-typ"/>
</dbReference>
<dbReference type="InterPro" id="IPR019479">
    <property type="entry name" value="Peroxiredoxin_C"/>
</dbReference>
<dbReference type="InterPro" id="IPR036249">
    <property type="entry name" value="Thioredoxin-like_sf"/>
</dbReference>
<dbReference type="InterPro" id="IPR013766">
    <property type="entry name" value="Thioredoxin_domain"/>
</dbReference>
<dbReference type="NCBIfam" id="TIGR03137">
    <property type="entry name" value="AhpC"/>
    <property type="match status" value="1"/>
</dbReference>
<dbReference type="PANTHER" id="PTHR10681:SF121">
    <property type="entry name" value="ALKYL HYDROPEROXIDE REDUCTASE C"/>
    <property type="match status" value="1"/>
</dbReference>
<dbReference type="PANTHER" id="PTHR10681">
    <property type="entry name" value="THIOREDOXIN PEROXIDASE"/>
    <property type="match status" value="1"/>
</dbReference>
<dbReference type="Pfam" id="PF10417">
    <property type="entry name" value="1-cysPrx_C"/>
    <property type="match status" value="1"/>
</dbReference>
<dbReference type="Pfam" id="PF00578">
    <property type="entry name" value="AhpC-TSA"/>
    <property type="match status" value="1"/>
</dbReference>
<dbReference type="PIRSF" id="PIRSF000239">
    <property type="entry name" value="AHPC"/>
    <property type="match status" value="1"/>
</dbReference>
<dbReference type="SUPFAM" id="SSF52833">
    <property type="entry name" value="Thioredoxin-like"/>
    <property type="match status" value="1"/>
</dbReference>
<dbReference type="PROSITE" id="PS51352">
    <property type="entry name" value="THIOREDOXIN_2"/>
    <property type="match status" value="1"/>
</dbReference>
<sequence length="189" mass="21036">MSLINKEILPFTANAYDPQKDEFFEVSDENLKGSWSVVCFYPADFSFVCPTELEDLQGQYDKLQELGVNVYSVSTDTHFVHKAWHDHSDAISKIQYTMIGDPSQTITRNFDVLDEELGLAQRGTFIVDPDGVVQAAEVNADGIGRDASTLVHKIKAAQYVRQHPGEVCPAKWEEGSETLQPGLDLVGKI</sequence>